<feature type="signal peptide" evidence="1">
    <location>
        <begin position="1"/>
        <end position="26"/>
    </location>
</feature>
<feature type="peptide" id="PRO_0000024985" description="NPP">
    <location>
        <begin position="27"/>
        <end position="99"/>
    </location>
</feature>
<feature type="peptide" id="PRO_0000024986" description="Melanotropin gamma">
    <location>
        <begin position="77"/>
        <end position="87"/>
    </location>
</feature>
<feature type="peptide" id="PRO_0000024987" description="Potential peptide">
    <location>
        <begin position="91"/>
        <end position="131"/>
    </location>
</feature>
<feature type="peptide" id="PRO_0000024988" description="Corticotropin">
    <location>
        <begin position="135"/>
        <end position="173"/>
    </location>
</feature>
<feature type="peptide" id="PRO_0000024989" description="Melanocyte-stimulating hormone alpha">
    <location>
        <begin position="135"/>
        <end position="147"/>
    </location>
</feature>
<feature type="peptide" id="PRO_0000024990" description="Corticotropin-like intermediary peptide">
    <location>
        <begin position="153"/>
        <end position="173"/>
    </location>
</feature>
<feature type="peptide" id="PRO_0000024991" description="Lipotropin beta">
    <location>
        <begin position="176"/>
        <end position="264"/>
    </location>
</feature>
<feature type="peptide" id="PRO_0000024992" description="Lipotropin gamma">
    <location>
        <begin position="176"/>
        <end position="231"/>
    </location>
</feature>
<feature type="peptide" id="PRO_0000024993" description="Melanocyte-stimulating hormone beta">
    <location>
        <begin position="214"/>
        <end position="231"/>
    </location>
</feature>
<feature type="peptide" id="PRO_0000024994" description="Beta-endorphin">
    <location>
        <begin position="234"/>
        <end position="264"/>
    </location>
</feature>
<feature type="peptide" id="PRO_0000024995" description="Met-enkephalin">
    <location>
        <begin position="234"/>
        <end position="238"/>
    </location>
</feature>
<feature type="region of interest" description="Disordered" evidence="6">
    <location>
        <begin position="88"/>
        <end position="204"/>
    </location>
</feature>
<feature type="region of interest" description="Disordered" evidence="6">
    <location>
        <begin position="219"/>
        <end position="238"/>
    </location>
</feature>
<feature type="compositionally biased region" description="Basic and acidic residues" evidence="6">
    <location>
        <begin position="99"/>
        <end position="122"/>
    </location>
</feature>
<feature type="compositionally biased region" description="Basic and acidic residues" evidence="6">
    <location>
        <begin position="130"/>
        <end position="142"/>
    </location>
</feature>
<feature type="compositionally biased region" description="Basic and acidic residues" evidence="6">
    <location>
        <begin position="172"/>
        <end position="186"/>
    </location>
</feature>
<feature type="compositionally biased region" description="Low complexity" evidence="6">
    <location>
        <begin position="189"/>
        <end position="199"/>
    </location>
</feature>
<feature type="compositionally biased region" description="Basic and acidic residues" evidence="6">
    <location>
        <begin position="219"/>
        <end position="234"/>
    </location>
</feature>
<feature type="modified residue" description="Phenylalanine amide" evidence="8">
    <location>
        <position position="87"/>
    </location>
</feature>
<feature type="modified residue" description="Glutamic acid 1-amide" evidence="8">
    <location>
        <position position="131"/>
    </location>
</feature>
<feature type="modified residue" description="N-acetylserine; in Corticotropin" evidence="3">
    <location>
        <position position="135"/>
    </location>
</feature>
<feature type="modified residue" description="Valine amide" evidence="7 8">
    <location>
        <position position="147"/>
    </location>
</feature>
<feature type="modified residue" description="Phosphoserine" evidence="2">
    <location>
        <position position="165"/>
    </location>
</feature>
<feature type="glycosylation site" description="N-linked (GlcNAc...) asparagine" evidence="5">
    <location>
        <position position="91"/>
    </location>
</feature>
<sequence length="264" mass="29172">MPRSCCSRSGALLLALLLQASMEVRGWCLESSQCQDLTTESNLLECIRACKPDLSAETPVFPGNGDEQPLTENPRKYVMGHFRWDRFGRRNSSSGSAHQKREDVAAGEDRGLLPEGGPEPRGDGAGPGPREGKRSYSMEHFRWGKPVGKKRRPVKVYPNGAEDESAEAFPLEFKRELTGQRPRAGDGPDGPADDGAGPRADLEHSLLVAAEKKDEGPYRMEHFRWGSPPKDKRYGGFMTSEKSQTPLVTLFKNAIIKNAYKKGQ</sequence>
<reference key="1">
    <citation type="journal article" date="1988" name="DNA">
        <title>Characterization of pro-opiomelanocortin cDNA from the Old World monkey, Macaca nemestrina.</title>
        <authorList>
            <person name="Patel P.D."/>
            <person name="Sherman T.G."/>
            <person name="Watson S.J."/>
        </authorList>
    </citation>
    <scope>NUCLEOTIDE SEQUENCE [MRNA]</scope>
    <scope>AMIDATION AT PHE-87; GLU-131 AND VAL-147</scope>
</reference>
<reference key="2">
    <citation type="journal article" date="1961" name="J. Biol. Chem.">
        <title>The isolation and structure of alpha- and beta-melanocyte-stimulating hormones from monkey pituitary glands.</title>
        <authorList>
            <person name="Lee T.H."/>
            <person name="Lerner A.B."/>
            <person name="Buettner-Janusch V."/>
        </authorList>
    </citation>
    <scope>PROTEIN SEQUENCE OF 135-147 AND 214-231</scope>
    <scope>AMIDATION AT VAL-147</scope>
</reference>
<accession>P01201</accession>
<accession>P19403</accession>
<name>COLI_MACNE</name>
<gene>
    <name type="primary">POMC</name>
</gene>
<proteinExistence type="evidence at protein level"/>
<dbReference type="EMBL" id="M19658">
    <property type="protein sequence ID" value="AAA66022.1"/>
    <property type="molecule type" value="mRNA"/>
</dbReference>
<dbReference type="PIR" id="A31855">
    <property type="entry name" value="CTMKP"/>
</dbReference>
<dbReference type="BMRB" id="P01201"/>
<dbReference type="SMR" id="P01201"/>
<dbReference type="STRING" id="9545.ENSMNEP00000005588"/>
<dbReference type="GlyCosmos" id="P01201">
    <property type="glycosylation" value="1 site, No reported glycans"/>
</dbReference>
<dbReference type="Proteomes" id="UP000233120">
    <property type="component" value="Unassembled WGS sequence"/>
</dbReference>
<dbReference type="GO" id="GO:0005615">
    <property type="term" value="C:extracellular space"/>
    <property type="evidence" value="ECO:0007669"/>
    <property type="project" value="TreeGrafter"/>
</dbReference>
<dbReference type="GO" id="GO:0030141">
    <property type="term" value="C:secretory granule"/>
    <property type="evidence" value="ECO:0007669"/>
    <property type="project" value="TreeGrafter"/>
</dbReference>
<dbReference type="GO" id="GO:0001664">
    <property type="term" value="F:G protein-coupled receptor binding"/>
    <property type="evidence" value="ECO:0007669"/>
    <property type="project" value="TreeGrafter"/>
</dbReference>
<dbReference type="GO" id="GO:0005179">
    <property type="term" value="F:hormone activity"/>
    <property type="evidence" value="ECO:0007669"/>
    <property type="project" value="UniProtKB-KW"/>
</dbReference>
<dbReference type="GO" id="GO:0007218">
    <property type="term" value="P:neuropeptide signaling pathway"/>
    <property type="evidence" value="ECO:0007669"/>
    <property type="project" value="UniProtKB-KW"/>
</dbReference>
<dbReference type="GO" id="GO:2000852">
    <property type="term" value="P:regulation of corticosterone secretion"/>
    <property type="evidence" value="ECO:0007669"/>
    <property type="project" value="TreeGrafter"/>
</dbReference>
<dbReference type="InterPro" id="IPR013531">
    <property type="entry name" value="Mcrtin_ACTH_cent"/>
</dbReference>
<dbReference type="InterPro" id="IPR013593">
    <property type="entry name" value="Melanocortin_N"/>
</dbReference>
<dbReference type="InterPro" id="IPR013532">
    <property type="entry name" value="Opioid_neuropept"/>
</dbReference>
<dbReference type="InterPro" id="IPR001941">
    <property type="entry name" value="PMOC"/>
</dbReference>
<dbReference type="InterPro" id="IPR050878">
    <property type="entry name" value="POMC-derived_peptides"/>
</dbReference>
<dbReference type="PANTHER" id="PTHR11416">
    <property type="entry name" value="PRO-OPIOMELANOCORTIN"/>
    <property type="match status" value="1"/>
</dbReference>
<dbReference type="PANTHER" id="PTHR11416:SF7">
    <property type="entry name" value="PRO-OPIOMELANOCORTIN"/>
    <property type="match status" value="1"/>
</dbReference>
<dbReference type="Pfam" id="PF00976">
    <property type="entry name" value="ACTH_domain"/>
    <property type="match status" value="3"/>
</dbReference>
<dbReference type="Pfam" id="PF08384">
    <property type="entry name" value="NPP"/>
    <property type="match status" value="1"/>
</dbReference>
<dbReference type="Pfam" id="PF08035">
    <property type="entry name" value="Op_neuropeptide"/>
    <property type="match status" value="1"/>
</dbReference>
<dbReference type="PRINTS" id="PR00383">
    <property type="entry name" value="MELANOCORTIN"/>
</dbReference>
<dbReference type="SMART" id="SM01363">
    <property type="entry name" value="ACTH_domain"/>
    <property type="match status" value="3"/>
</dbReference>
<dbReference type="SMART" id="SM01364">
    <property type="entry name" value="NPP"/>
    <property type="match status" value="1"/>
</dbReference>
<dbReference type="SMART" id="SM01365">
    <property type="entry name" value="Op_neuropeptide"/>
    <property type="match status" value="1"/>
</dbReference>
<protein>
    <recommendedName>
        <fullName>Pro-opiomelanocortin</fullName>
        <shortName>POMC</shortName>
    </recommendedName>
    <alternativeName>
        <fullName>Corticotropin-lipotropin</fullName>
    </alternativeName>
    <component>
        <recommendedName>
            <fullName>NPP</fullName>
        </recommendedName>
    </component>
    <component>
        <recommendedName>
            <fullName>Melanotropin gamma</fullName>
        </recommendedName>
        <alternativeName>
            <fullName>Gamma-MSH</fullName>
        </alternativeName>
    </component>
    <component>
        <recommendedName>
            <fullName>Potential peptide</fullName>
        </recommendedName>
    </component>
    <component>
        <recommendedName>
            <fullName>Corticotropin</fullName>
        </recommendedName>
        <alternativeName>
            <fullName>Adrenocorticotropic hormone</fullName>
            <shortName>ACTH</shortName>
        </alternativeName>
    </component>
    <component>
        <recommendedName>
            <fullName>Melanocyte-stimulating hormone alpha</fullName>
            <shortName>Alpha-MSH</shortName>
        </recommendedName>
        <alternativeName>
            <fullName>Melanotropin alpha</fullName>
        </alternativeName>
    </component>
    <component>
        <recommendedName>
            <fullName>Corticotropin-like intermediary peptide</fullName>
            <shortName>CLIP</shortName>
        </recommendedName>
    </component>
    <component>
        <recommendedName>
            <fullName>Lipotropin beta</fullName>
        </recommendedName>
        <alternativeName>
            <fullName>Beta-LPH</fullName>
        </alternativeName>
    </component>
    <component>
        <recommendedName>
            <fullName>Lipotropin gamma</fullName>
        </recommendedName>
        <alternativeName>
            <fullName>Gamma-LPH</fullName>
        </alternativeName>
    </component>
    <component>
        <recommendedName>
            <fullName>Melanocyte-stimulating hormone beta</fullName>
            <shortName>Beta-MSH</shortName>
        </recommendedName>
        <alternativeName>
            <fullName>Melanotropin beta</fullName>
        </alternativeName>
    </component>
    <component>
        <recommendedName>
            <fullName>Beta-endorphin</fullName>
        </recommendedName>
    </component>
    <component>
        <recommendedName>
            <fullName>Met-enkephalin</fullName>
        </recommendedName>
    </component>
</protein>
<keyword id="KW-0007">Acetylation</keyword>
<keyword id="KW-0027">Amidation</keyword>
<keyword id="KW-0165">Cleavage on pair of basic residues</keyword>
<keyword id="KW-0903">Direct protein sequencing</keyword>
<keyword id="KW-0257">Endorphin</keyword>
<keyword id="KW-0325">Glycoprotein</keyword>
<keyword id="KW-0372">Hormone</keyword>
<keyword id="KW-0597">Phosphoprotein</keyword>
<keyword id="KW-1185">Reference proteome</keyword>
<keyword id="KW-0964">Secreted</keyword>
<keyword id="KW-0732">Signal</keyword>
<evidence type="ECO:0000250" key="1"/>
<evidence type="ECO:0000250" key="2">
    <source>
        <dbReference type="UniProtKB" id="P01189"/>
    </source>
</evidence>
<evidence type="ECO:0000250" key="3">
    <source>
        <dbReference type="UniProtKB" id="P01191"/>
    </source>
</evidence>
<evidence type="ECO:0000250" key="4">
    <source>
        <dbReference type="UniProtKB" id="P01193"/>
    </source>
</evidence>
<evidence type="ECO:0000255" key="5"/>
<evidence type="ECO:0000256" key="6">
    <source>
        <dbReference type="SAM" id="MobiDB-lite"/>
    </source>
</evidence>
<evidence type="ECO:0000269" key="7">
    <source>
    </source>
</evidence>
<evidence type="ECO:0000269" key="8">
    <source>
    </source>
</evidence>
<evidence type="ECO:0000305" key="9"/>
<organism>
    <name type="scientific">Macaca nemestrina</name>
    <name type="common">Pig-tailed macaque</name>
    <dbReference type="NCBI Taxonomy" id="9545"/>
    <lineage>
        <taxon>Eukaryota</taxon>
        <taxon>Metazoa</taxon>
        <taxon>Chordata</taxon>
        <taxon>Craniata</taxon>
        <taxon>Vertebrata</taxon>
        <taxon>Euteleostomi</taxon>
        <taxon>Mammalia</taxon>
        <taxon>Eutheria</taxon>
        <taxon>Euarchontoglires</taxon>
        <taxon>Primates</taxon>
        <taxon>Haplorrhini</taxon>
        <taxon>Catarrhini</taxon>
        <taxon>Cercopithecidae</taxon>
        <taxon>Cercopithecinae</taxon>
        <taxon>Macaca</taxon>
    </lineage>
</organism>
<comment type="function">
    <molecule>Corticotropin</molecule>
    <text>Stimulates the adrenal glands to release cortisol.</text>
</comment>
<comment type="function">
    <molecule>Melanocyte-stimulating hormone alpha</molecule>
    <text>Anorexigenic peptide. Increases the pigmentation of skin by increasing melanin production in melanocytes.</text>
</comment>
<comment type="function">
    <molecule>Melanocyte-stimulating hormone beta</molecule>
    <text>Increases the pigmentation of skin by increasing melanin production in melanocytes.</text>
</comment>
<comment type="function">
    <molecule>Beta-endorphin</molecule>
    <text>Endogenous orexigenic opiate.</text>
</comment>
<comment type="function">
    <molecule>Met-enkephalin</molecule>
    <text>Endogenous opiate.</text>
</comment>
<comment type="subcellular location">
    <subcellularLocation>
        <location evidence="4">Secreted</location>
    </subcellularLocation>
    <text evidence="4">Melanocyte-stimulating hormone alpha and beta-endorphin are stored in separate granules in hypothalamic POMC neurons, suggesting that secretion may be under the control of different regulatory mechanisms.</text>
</comment>
<comment type="tissue specificity">
    <text>ACTH and MSH are produced by the pituitary gland.</text>
</comment>
<comment type="PTM">
    <text>Specific enzymatic cleavages at paired basic residues yield the different active peptides.</text>
</comment>
<comment type="similarity">
    <text evidence="9">Belongs to the POMC family.</text>
</comment>